<accession>Q8TX94</accession>
<keyword id="KW-0028">Amino-acid biosynthesis</keyword>
<keyword id="KW-0100">Branched-chain amino acid biosynthesis</keyword>
<keyword id="KW-0432">Leucine biosynthesis</keyword>
<keyword id="KW-0456">Lyase</keyword>
<keyword id="KW-1185">Reference proteome</keyword>
<protein>
    <recommendedName>
        <fullName>3-isopropylmalate dehydratase small subunit 1</fullName>
        <ecNumber>4.2.1.33</ecNumber>
    </recommendedName>
    <alternativeName>
        <fullName>Alpha-IPM isomerase 1</fullName>
        <shortName>IPMI 1</shortName>
    </alternativeName>
    <alternativeName>
        <fullName>Isopropylmalate isomerase 1</fullName>
    </alternativeName>
</protein>
<gene>
    <name type="primary">leuD1</name>
    <name type="synonym">leuD_1</name>
    <name type="ordered locus">MK0781</name>
</gene>
<dbReference type="EC" id="4.2.1.33"/>
<dbReference type="EMBL" id="AE009439">
    <property type="protein sequence ID" value="AAM01995.1"/>
    <property type="molecule type" value="Genomic_DNA"/>
</dbReference>
<dbReference type="RefSeq" id="WP_011019150.1">
    <property type="nucleotide sequence ID" value="NC_003551.1"/>
</dbReference>
<dbReference type="SMR" id="Q8TX94"/>
<dbReference type="FunCoup" id="Q8TX94">
    <property type="interactions" value="73"/>
</dbReference>
<dbReference type="STRING" id="190192.MK0781"/>
<dbReference type="PaxDb" id="190192-MK0781"/>
<dbReference type="EnsemblBacteria" id="AAM01995">
    <property type="protein sequence ID" value="AAM01995"/>
    <property type="gene ID" value="MK0781"/>
</dbReference>
<dbReference type="GeneID" id="1476882"/>
<dbReference type="KEGG" id="mka:MK0781"/>
<dbReference type="PATRIC" id="fig|190192.8.peg.822"/>
<dbReference type="HOGENOM" id="CLU_081378_1_1_2"/>
<dbReference type="InParanoid" id="Q8TX94"/>
<dbReference type="OrthoDB" id="6505at2157"/>
<dbReference type="UniPathway" id="UPA00048">
    <property type="reaction ID" value="UER00071"/>
</dbReference>
<dbReference type="Proteomes" id="UP000001826">
    <property type="component" value="Chromosome"/>
</dbReference>
<dbReference type="GO" id="GO:0003861">
    <property type="term" value="F:3-isopropylmalate dehydratase activity"/>
    <property type="evidence" value="ECO:0007669"/>
    <property type="project" value="UniProtKB-UniRule"/>
</dbReference>
<dbReference type="GO" id="GO:0009098">
    <property type="term" value="P:L-leucine biosynthetic process"/>
    <property type="evidence" value="ECO:0007669"/>
    <property type="project" value="UniProtKB-UniRule"/>
</dbReference>
<dbReference type="CDD" id="cd01577">
    <property type="entry name" value="IPMI_Swivel"/>
    <property type="match status" value="1"/>
</dbReference>
<dbReference type="FunFam" id="3.20.19.10:FF:000007">
    <property type="entry name" value="Isopropylmalate/citramalate isomerase small subunit"/>
    <property type="match status" value="1"/>
</dbReference>
<dbReference type="Gene3D" id="3.20.19.10">
    <property type="entry name" value="Aconitase, domain 4"/>
    <property type="match status" value="1"/>
</dbReference>
<dbReference type="HAMAP" id="MF_01032">
    <property type="entry name" value="LeuD_type2"/>
    <property type="match status" value="1"/>
</dbReference>
<dbReference type="InterPro" id="IPR015928">
    <property type="entry name" value="Aconitase/3IPM_dehydase_swvl"/>
</dbReference>
<dbReference type="InterPro" id="IPR000573">
    <property type="entry name" value="AconitaseA/IPMdHydase_ssu_swvl"/>
</dbReference>
<dbReference type="InterPro" id="IPR033940">
    <property type="entry name" value="IPMI_Swivel"/>
</dbReference>
<dbReference type="InterPro" id="IPR050075">
    <property type="entry name" value="LeuD"/>
</dbReference>
<dbReference type="InterPro" id="IPR011827">
    <property type="entry name" value="LeuD_type2/HacB/DmdB"/>
</dbReference>
<dbReference type="NCBIfam" id="TIGR02087">
    <property type="entry name" value="LEUD_arch"/>
    <property type="match status" value="1"/>
</dbReference>
<dbReference type="PANTHER" id="PTHR43345:SF2">
    <property type="entry name" value="3-ISOPROPYLMALATE DEHYDRATASE SMALL SUBUNIT 1"/>
    <property type="match status" value="1"/>
</dbReference>
<dbReference type="PANTHER" id="PTHR43345">
    <property type="entry name" value="3-ISOPROPYLMALATE DEHYDRATASE SMALL SUBUNIT 2-RELATED-RELATED"/>
    <property type="match status" value="1"/>
</dbReference>
<dbReference type="Pfam" id="PF00694">
    <property type="entry name" value="Aconitase_C"/>
    <property type="match status" value="1"/>
</dbReference>
<dbReference type="SUPFAM" id="SSF52016">
    <property type="entry name" value="LeuD/IlvD-like"/>
    <property type="match status" value="1"/>
</dbReference>
<reference key="1">
    <citation type="journal article" date="2002" name="Proc. Natl. Acad. Sci. U.S.A.">
        <title>The complete genome of hyperthermophile Methanopyrus kandleri AV19 and monophyly of archaeal methanogens.</title>
        <authorList>
            <person name="Slesarev A.I."/>
            <person name="Mezhevaya K.V."/>
            <person name="Makarova K.S."/>
            <person name="Polushin N.N."/>
            <person name="Shcherbinina O.V."/>
            <person name="Shakhova V.V."/>
            <person name="Belova G.I."/>
            <person name="Aravind L."/>
            <person name="Natale D.A."/>
            <person name="Rogozin I.B."/>
            <person name="Tatusov R.L."/>
            <person name="Wolf Y.I."/>
            <person name="Stetter K.O."/>
            <person name="Malykh A.G."/>
            <person name="Koonin E.V."/>
            <person name="Kozyavkin S.A."/>
        </authorList>
    </citation>
    <scope>NUCLEOTIDE SEQUENCE [LARGE SCALE GENOMIC DNA]</scope>
    <source>
        <strain>AV19 / DSM 6324 / JCM 9639 / NBRC 100938</strain>
    </source>
</reference>
<name>LEUD1_METKA</name>
<feature type="chain" id="PRO_0000141938" description="3-isopropylmalate dehydratase small subunit 1">
    <location>
        <begin position="1"/>
        <end position="170"/>
    </location>
</feature>
<proteinExistence type="inferred from homology"/>
<evidence type="ECO:0000250" key="1"/>
<evidence type="ECO:0000305" key="2"/>
<sequence>MRDVIRGRAWVFGDDIDTDQIIPGRYLTTQDPEELAKHVMEGADPEFPEKVREGDVIVAGKNFGCGSSREHAPIALKAAGIACVVTRSFARIFYRNAINLGLPLVVCPGVDDAFEDGQGIEVNLREGYVRNLDTGEELEAKPLPDFMMRILEAGGLVELIKREGPRAFEG</sequence>
<organism>
    <name type="scientific">Methanopyrus kandleri (strain AV19 / DSM 6324 / JCM 9639 / NBRC 100938)</name>
    <dbReference type="NCBI Taxonomy" id="190192"/>
    <lineage>
        <taxon>Archaea</taxon>
        <taxon>Methanobacteriati</taxon>
        <taxon>Methanobacteriota</taxon>
        <taxon>Methanomada group</taxon>
        <taxon>Methanopyri</taxon>
        <taxon>Methanopyrales</taxon>
        <taxon>Methanopyraceae</taxon>
        <taxon>Methanopyrus</taxon>
    </lineage>
</organism>
<comment type="function">
    <text evidence="1">Catalyzes the isomerization between 2-isopropylmalate and 3-isopropylmalate, via the formation of 2-isopropylmaleate.</text>
</comment>
<comment type="catalytic activity">
    <reaction>
        <text>(2R,3S)-3-isopropylmalate = (2S)-2-isopropylmalate</text>
        <dbReference type="Rhea" id="RHEA:32287"/>
        <dbReference type="ChEBI" id="CHEBI:1178"/>
        <dbReference type="ChEBI" id="CHEBI:35121"/>
        <dbReference type="EC" id="4.2.1.33"/>
    </reaction>
</comment>
<comment type="pathway">
    <text>Amino-acid biosynthesis; L-leucine biosynthesis; L-leucine from 3-methyl-2-oxobutanoate: step 2/4.</text>
</comment>
<comment type="subunit">
    <text evidence="1">Heterodimer of LeuC and LeuD.</text>
</comment>
<comment type="similarity">
    <text evidence="2">Belongs to the LeuD family. LeuD type 2 subfamily.</text>
</comment>